<gene>
    <name evidence="1" type="primary">kynU</name>
    <name type="ordered locus">FP2215</name>
</gene>
<feature type="chain" id="PRO_0000357006" description="Kynureninase">
    <location>
        <begin position="1"/>
        <end position="425"/>
    </location>
</feature>
<feature type="binding site" evidence="1">
    <location>
        <position position="105"/>
    </location>
    <ligand>
        <name>pyridoxal 5'-phosphate</name>
        <dbReference type="ChEBI" id="CHEBI:597326"/>
    </ligand>
</feature>
<feature type="binding site" evidence="1">
    <location>
        <position position="106"/>
    </location>
    <ligand>
        <name>pyridoxal 5'-phosphate</name>
        <dbReference type="ChEBI" id="CHEBI:597326"/>
    </ligand>
</feature>
<feature type="binding site" evidence="1">
    <location>
        <begin position="133"/>
        <end position="136"/>
    </location>
    <ligand>
        <name>pyridoxal 5'-phosphate</name>
        <dbReference type="ChEBI" id="CHEBI:597326"/>
    </ligand>
</feature>
<feature type="binding site" evidence="1">
    <location>
        <position position="218"/>
    </location>
    <ligand>
        <name>pyridoxal 5'-phosphate</name>
        <dbReference type="ChEBI" id="CHEBI:597326"/>
    </ligand>
</feature>
<feature type="binding site" evidence="1">
    <location>
        <position position="221"/>
    </location>
    <ligand>
        <name>pyridoxal 5'-phosphate</name>
        <dbReference type="ChEBI" id="CHEBI:597326"/>
    </ligand>
</feature>
<feature type="binding site" evidence="1">
    <location>
        <position position="243"/>
    </location>
    <ligand>
        <name>pyridoxal 5'-phosphate</name>
        <dbReference type="ChEBI" id="CHEBI:597326"/>
    </ligand>
</feature>
<feature type="binding site" evidence="1">
    <location>
        <position position="274"/>
    </location>
    <ligand>
        <name>pyridoxal 5'-phosphate</name>
        <dbReference type="ChEBI" id="CHEBI:597326"/>
    </ligand>
</feature>
<feature type="binding site" evidence="1">
    <location>
        <position position="302"/>
    </location>
    <ligand>
        <name>pyridoxal 5'-phosphate</name>
        <dbReference type="ChEBI" id="CHEBI:597326"/>
    </ligand>
</feature>
<feature type="modified residue" description="N6-(pyridoxal phosphate)lysine" evidence="1">
    <location>
        <position position="244"/>
    </location>
</feature>
<sequence>MIFQNTLEFAQQLDNQDELKEYKNEFIFPQHEGKNVIYFTGNSLGLQPKSARNYVDEVMNDWANLAVEGHFYADKPWWDYQERFANPLSKIVGAKPLEVTVMNTLTVNLHLLMVSFYRPTKKRYKIICEEKAFPSDQYMFQSQVNFHGYKPEDAIVEIKRREGEHNIRLEDILSKIEAVGDELALVLFGGVNYYTGQVFDMKTITEAGHKQGAKVGFDLAHAAGNIKLELHDWNVDFAAWCSYKYMNSGPGNASGCFVHEKHHSDSNLPRFAGWWGHNKERRFKMEPTFDPVHGADGWQISNLPILSLAPYLASVEMFAEVGIEKLIRKRNQITAYLEFILHEIDKEVKGHFEILTPTNQEERACQLSVFLHGEGRSLFDYLMKNGVVTDWREPNVIRLAPVPLYCSFEDMYNFGQILKKGILEN</sequence>
<proteinExistence type="inferred from homology"/>
<reference key="1">
    <citation type="journal article" date="2007" name="Nat. Biotechnol.">
        <title>Complete genome sequence of the fish pathogen Flavobacterium psychrophilum.</title>
        <authorList>
            <person name="Duchaud E."/>
            <person name="Boussaha M."/>
            <person name="Loux V."/>
            <person name="Bernardet J.-F."/>
            <person name="Michel C."/>
            <person name="Kerouault B."/>
            <person name="Mondot S."/>
            <person name="Nicolas P."/>
            <person name="Bossy R."/>
            <person name="Caron C."/>
            <person name="Bessieres P."/>
            <person name="Gibrat J.-F."/>
            <person name="Claverol S."/>
            <person name="Dumetz F."/>
            <person name="Le Henaff M."/>
            <person name="Benmansour A."/>
        </authorList>
    </citation>
    <scope>NUCLEOTIDE SEQUENCE [LARGE SCALE GENOMIC DNA]</scope>
    <source>
        <strain>ATCC 49511 / DSM 21280 / CIP 103535 / JIP02/86</strain>
    </source>
</reference>
<accession>A6H1P7</accession>
<comment type="function">
    <text evidence="1">Catalyzes the cleavage of L-kynurenine (L-Kyn) and L-3-hydroxykynurenine (L-3OHKyn) into anthranilic acid (AA) and 3-hydroxyanthranilic acid (3-OHAA), respectively.</text>
</comment>
<comment type="catalytic activity">
    <reaction evidence="1">
        <text>L-kynurenine + H2O = anthranilate + L-alanine + H(+)</text>
        <dbReference type="Rhea" id="RHEA:16813"/>
        <dbReference type="ChEBI" id="CHEBI:15377"/>
        <dbReference type="ChEBI" id="CHEBI:15378"/>
        <dbReference type="ChEBI" id="CHEBI:16567"/>
        <dbReference type="ChEBI" id="CHEBI:57959"/>
        <dbReference type="ChEBI" id="CHEBI:57972"/>
        <dbReference type="EC" id="3.7.1.3"/>
    </reaction>
</comment>
<comment type="catalytic activity">
    <reaction evidence="1">
        <text>3-hydroxy-L-kynurenine + H2O = 3-hydroxyanthranilate + L-alanine + H(+)</text>
        <dbReference type="Rhea" id="RHEA:25143"/>
        <dbReference type="ChEBI" id="CHEBI:15377"/>
        <dbReference type="ChEBI" id="CHEBI:15378"/>
        <dbReference type="ChEBI" id="CHEBI:36559"/>
        <dbReference type="ChEBI" id="CHEBI:57972"/>
        <dbReference type="ChEBI" id="CHEBI:58125"/>
        <dbReference type="EC" id="3.7.1.3"/>
    </reaction>
</comment>
<comment type="cofactor">
    <cofactor evidence="1">
        <name>pyridoxal 5'-phosphate</name>
        <dbReference type="ChEBI" id="CHEBI:597326"/>
    </cofactor>
</comment>
<comment type="pathway">
    <text evidence="1">Amino-acid degradation; L-kynurenine degradation; L-alanine and anthranilate from L-kynurenine: step 1/1.</text>
</comment>
<comment type="pathway">
    <text evidence="1">Cofactor biosynthesis; NAD(+) biosynthesis; quinolinate from L-kynurenine: step 2/3.</text>
</comment>
<comment type="subunit">
    <text evidence="1">Homodimer.</text>
</comment>
<comment type="similarity">
    <text evidence="1">Belongs to the kynureninase family.</text>
</comment>
<dbReference type="EC" id="3.7.1.3" evidence="1"/>
<dbReference type="EMBL" id="AM398681">
    <property type="protein sequence ID" value="CAL44271.1"/>
    <property type="molecule type" value="Genomic_DNA"/>
</dbReference>
<dbReference type="RefSeq" id="WP_011964305.1">
    <property type="nucleotide sequence ID" value="NC_009613.3"/>
</dbReference>
<dbReference type="RefSeq" id="YP_001297072.1">
    <property type="nucleotide sequence ID" value="NC_009613.3"/>
</dbReference>
<dbReference type="SMR" id="A6H1P7"/>
<dbReference type="STRING" id="402612.FP2215"/>
<dbReference type="EnsemblBacteria" id="CAL44271">
    <property type="protein sequence ID" value="CAL44271"/>
    <property type="gene ID" value="FP2215"/>
</dbReference>
<dbReference type="GeneID" id="66553318"/>
<dbReference type="KEGG" id="fps:FP2215"/>
<dbReference type="PATRIC" id="fig|402612.5.peg.2262"/>
<dbReference type="eggNOG" id="COG3844">
    <property type="taxonomic scope" value="Bacteria"/>
</dbReference>
<dbReference type="HOGENOM" id="CLU_003433_4_0_10"/>
<dbReference type="OrthoDB" id="9812626at2"/>
<dbReference type="UniPathway" id="UPA00253">
    <property type="reaction ID" value="UER00329"/>
</dbReference>
<dbReference type="UniPathway" id="UPA00334">
    <property type="reaction ID" value="UER00455"/>
</dbReference>
<dbReference type="Proteomes" id="UP000006394">
    <property type="component" value="Chromosome"/>
</dbReference>
<dbReference type="GO" id="GO:0005737">
    <property type="term" value="C:cytoplasm"/>
    <property type="evidence" value="ECO:0007669"/>
    <property type="project" value="InterPro"/>
</dbReference>
<dbReference type="GO" id="GO:0030429">
    <property type="term" value="F:kynureninase activity"/>
    <property type="evidence" value="ECO:0007669"/>
    <property type="project" value="UniProtKB-UniRule"/>
</dbReference>
<dbReference type="GO" id="GO:0030170">
    <property type="term" value="F:pyridoxal phosphate binding"/>
    <property type="evidence" value="ECO:0007669"/>
    <property type="project" value="UniProtKB-UniRule"/>
</dbReference>
<dbReference type="GO" id="GO:0043420">
    <property type="term" value="P:anthranilate metabolic process"/>
    <property type="evidence" value="ECO:0007669"/>
    <property type="project" value="TreeGrafter"/>
</dbReference>
<dbReference type="GO" id="GO:0097053">
    <property type="term" value="P:L-kynurenine catabolic process"/>
    <property type="evidence" value="ECO:0007669"/>
    <property type="project" value="UniProtKB-UniRule"/>
</dbReference>
<dbReference type="GO" id="GO:0019441">
    <property type="term" value="P:L-tryptophan catabolic process to kynurenine"/>
    <property type="evidence" value="ECO:0007669"/>
    <property type="project" value="TreeGrafter"/>
</dbReference>
<dbReference type="GO" id="GO:0009435">
    <property type="term" value="P:NAD biosynthetic process"/>
    <property type="evidence" value="ECO:0007669"/>
    <property type="project" value="UniProtKB-UniPathway"/>
</dbReference>
<dbReference type="GO" id="GO:0019805">
    <property type="term" value="P:quinolinate biosynthetic process"/>
    <property type="evidence" value="ECO:0007669"/>
    <property type="project" value="UniProtKB-UniRule"/>
</dbReference>
<dbReference type="FunFam" id="3.40.640.10:FF:000031">
    <property type="entry name" value="Kynureninase"/>
    <property type="match status" value="1"/>
</dbReference>
<dbReference type="Gene3D" id="3.90.1150.10">
    <property type="entry name" value="Aspartate Aminotransferase, domain 1"/>
    <property type="match status" value="1"/>
</dbReference>
<dbReference type="Gene3D" id="3.40.640.10">
    <property type="entry name" value="Type I PLP-dependent aspartate aminotransferase-like (Major domain)"/>
    <property type="match status" value="1"/>
</dbReference>
<dbReference type="HAMAP" id="MF_01970">
    <property type="entry name" value="Kynureninase"/>
    <property type="match status" value="1"/>
</dbReference>
<dbReference type="InterPro" id="IPR000192">
    <property type="entry name" value="Aminotrans_V_dom"/>
</dbReference>
<dbReference type="InterPro" id="IPR010111">
    <property type="entry name" value="Kynureninase"/>
</dbReference>
<dbReference type="InterPro" id="IPR015424">
    <property type="entry name" value="PyrdxlP-dep_Trfase"/>
</dbReference>
<dbReference type="InterPro" id="IPR015421">
    <property type="entry name" value="PyrdxlP-dep_Trfase_major"/>
</dbReference>
<dbReference type="InterPro" id="IPR015422">
    <property type="entry name" value="PyrdxlP-dep_Trfase_small"/>
</dbReference>
<dbReference type="NCBIfam" id="TIGR01814">
    <property type="entry name" value="kynureninase"/>
    <property type="match status" value="1"/>
</dbReference>
<dbReference type="PANTHER" id="PTHR14084">
    <property type="entry name" value="KYNURENINASE"/>
    <property type="match status" value="1"/>
</dbReference>
<dbReference type="PANTHER" id="PTHR14084:SF0">
    <property type="entry name" value="KYNURENINASE"/>
    <property type="match status" value="1"/>
</dbReference>
<dbReference type="Pfam" id="PF00266">
    <property type="entry name" value="Aminotran_5"/>
    <property type="match status" value="1"/>
</dbReference>
<dbReference type="Pfam" id="PF22580">
    <property type="entry name" value="KYNU_C"/>
    <property type="match status" value="1"/>
</dbReference>
<dbReference type="PIRSF" id="PIRSF038800">
    <property type="entry name" value="KYNU"/>
    <property type="match status" value="1"/>
</dbReference>
<dbReference type="SUPFAM" id="SSF53383">
    <property type="entry name" value="PLP-dependent transferases"/>
    <property type="match status" value="1"/>
</dbReference>
<protein>
    <recommendedName>
        <fullName evidence="1">Kynureninase</fullName>
        <ecNumber evidence="1">3.7.1.3</ecNumber>
    </recommendedName>
    <alternativeName>
        <fullName evidence="1">L-kynurenine hydrolase</fullName>
    </alternativeName>
</protein>
<keyword id="KW-0378">Hydrolase</keyword>
<keyword id="KW-0662">Pyridine nucleotide biosynthesis</keyword>
<keyword id="KW-0663">Pyridoxal phosphate</keyword>
<keyword id="KW-1185">Reference proteome</keyword>
<evidence type="ECO:0000255" key="1">
    <source>
        <dbReference type="HAMAP-Rule" id="MF_01970"/>
    </source>
</evidence>
<organism>
    <name type="scientific">Flavobacterium psychrophilum (strain ATCC 49511 / DSM 21280 / CIP 103535 / JIP02/86)</name>
    <dbReference type="NCBI Taxonomy" id="402612"/>
    <lineage>
        <taxon>Bacteria</taxon>
        <taxon>Pseudomonadati</taxon>
        <taxon>Bacteroidota</taxon>
        <taxon>Flavobacteriia</taxon>
        <taxon>Flavobacteriales</taxon>
        <taxon>Flavobacteriaceae</taxon>
        <taxon>Flavobacterium</taxon>
    </lineage>
</organism>
<name>KYNU_FLAPJ</name>